<accession>A3NC72</accession>
<gene>
    <name evidence="1" type="primary">fbp</name>
    <name type="ordered locus">BURPS668_2925</name>
</gene>
<name>F16PA_BURP6</name>
<protein>
    <recommendedName>
        <fullName evidence="1">Fructose-1,6-bisphosphatase class 1</fullName>
        <shortName evidence="1">FBPase class 1</shortName>
        <ecNumber evidence="1">3.1.3.11</ecNumber>
    </recommendedName>
    <alternativeName>
        <fullName evidence="1">D-fructose-1,6-bisphosphate 1-phosphohydrolase class 1</fullName>
    </alternativeName>
</protein>
<keyword id="KW-0119">Carbohydrate metabolism</keyword>
<keyword id="KW-0963">Cytoplasm</keyword>
<keyword id="KW-0378">Hydrolase</keyword>
<keyword id="KW-0460">Magnesium</keyword>
<keyword id="KW-0479">Metal-binding</keyword>
<dbReference type="EC" id="3.1.3.11" evidence="1"/>
<dbReference type="EMBL" id="CP000570">
    <property type="protein sequence ID" value="ABN81797.1"/>
    <property type="molecule type" value="Genomic_DNA"/>
</dbReference>
<dbReference type="RefSeq" id="WP_004189384.1">
    <property type="nucleotide sequence ID" value="NC_009074.1"/>
</dbReference>
<dbReference type="SMR" id="A3NC72"/>
<dbReference type="KEGG" id="bpd:BURPS668_2925"/>
<dbReference type="HOGENOM" id="CLU_039977_0_0_4"/>
<dbReference type="UniPathway" id="UPA00138"/>
<dbReference type="GO" id="GO:0005829">
    <property type="term" value="C:cytosol"/>
    <property type="evidence" value="ECO:0007669"/>
    <property type="project" value="TreeGrafter"/>
</dbReference>
<dbReference type="GO" id="GO:0042132">
    <property type="term" value="F:fructose 1,6-bisphosphate 1-phosphatase activity"/>
    <property type="evidence" value="ECO:0007669"/>
    <property type="project" value="UniProtKB-UniRule"/>
</dbReference>
<dbReference type="GO" id="GO:0000287">
    <property type="term" value="F:magnesium ion binding"/>
    <property type="evidence" value="ECO:0007669"/>
    <property type="project" value="UniProtKB-UniRule"/>
</dbReference>
<dbReference type="GO" id="GO:0030388">
    <property type="term" value="P:fructose 1,6-bisphosphate metabolic process"/>
    <property type="evidence" value="ECO:0007669"/>
    <property type="project" value="TreeGrafter"/>
</dbReference>
<dbReference type="GO" id="GO:0006002">
    <property type="term" value="P:fructose 6-phosphate metabolic process"/>
    <property type="evidence" value="ECO:0007669"/>
    <property type="project" value="TreeGrafter"/>
</dbReference>
<dbReference type="GO" id="GO:0006000">
    <property type="term" value="P:fructose metabolic process"/>
    <property type="evidence" value="ECO:0007669"/>
    <property type="project" value="TreeGrafter"/>
</dbReference>
<dbReference type="GO" id="GO:0006094">
    <property type="term" value="P:gluconeogenesis"/>
    <property type="evidence" value="ECO:0007669"/>
    <property type="project" value="UniProtKB-UniRule"/>
</dbReference>
<dbReference type="GO" id="GO:0005986">
    <property type="term" value="P:sucrose biosynthetic process"/>
    <property type="evidence" value="ECO:0007669"/>
    <property type="project" value="TreeGrafter"/>
</dbReference>
<dbReference type="CDD" id="cd00354">
    <property type="entry name" value="FBPase"/>
    <property type="match status" value="1"/>
</dbReference>
<dbReference type="FunFam" id="3.30.540.10:FF:000006">
    <property type="entry name" value="Fructose-1,6-bisphosphatase class 1"/>
    <property type="match status" value="1"/>
</dbReference>
<dbReference type="FunFam" id="3.40.190.80:FF:000011">
    <property type="entry name" value="Fructose-1,6-bisphosphatase class 1"/>
    <property type="match status" value="1"/>
</dbReference>
<dbReference type="Gene3D" id="3.40.190.80">
    <property type="match status" value="1"/>
</dbReference>
<dbReference type="Gene3D" id="3.30.540.10">
    <property type="entry name" value="Fructose-1,6-Bisphosphatase, subunit A, domain 1"/>
    <property type="match status" value="1"/>
</dbReference>
<dbReference type="HAMAP" id="MF_01855">
    <property type="entry name" value="FBPase_class1"/>
    <property type="match status" value="1"/>
</dbReference>
<dbReference type="InterPro" id="IPR044015">
    <property type="entry name" value="FBPase_C_dom"/>
</dbReference>
<dbReference type="InterPro" id="IPR000146">
    <property type="entry name" value="FBPase_class-1"/>
</dbReference>
<dbReference type="InterPro" id="IPR033391">
    <property type="entry name" value="FBPase_N"/>
</dbReference>
<dbReference type="InterPro" id="IPR028343">
    <property type="entry name" value="FBPtase"/>
</dbReference>
<dbReference type="NCBIfam" id="NF006778">
    <property type="entry name" value="PRK09293.1-1"/>
    <property type="match status" value="1"/>
</dbReference>
<dbReference type="NCBIfam" id="NF006779">
    <property type="entry name" value="PRK09293.1-3"/>
    <property type="match status" value="1"/>
</dbReference>
<dbReference type="NCBIfam" id="NF006780">
    <property type="entry name" value="PRK09293.1-4"/>
    <property type="match status" value="1"/>
</dbReference>
<dbReference type="PANTHER" id="PTHR11556">
    <property type="entry name" value="FRUCTOSE-1,6-BISPHOSPHATASE-RELATED"/>
    <property type="match status" value="1"/>
</dbReference>
<dbReference type="PANTHER" id="PTHR11556:SF35">
    <property type="entry name" value="SEDOHEPTULOSE-1,7-BISPHOSPHATASE, CHLOROPLASTIC"/>
    <property type="match status" value="1"/>
</dbReference>
<dbReference type="Pfam" id="PF00316">
    <property type="entry name" value="FBPase"/>
    <property type="match status" value="1"/>
</dbReference>
<dbReference type="Pfam" id="PF18913">
    <property type="entry name" value="FBPase_C"/>
    <property type="match status" value="1"/>
</dbReference>
<dbReference type="PIRSF" id="PIRSF500210">
    <property type="entry name" value="FBPtase"/>
    <property type="match status" value="1"/>
</dbReference>
<dbReference type="PIRSF" id="PIRSF000904">
    <property type="entry name" value="FBPtase_SBPase"/>
    <property type="match status" value="1"/>
</dbReference>
<dbReference type="PRINTS" id="PR00115">
    <property type="entry name" value="F16BPHPHTASE"/>
</dbReference>
<dbReference type="SUPFAM" id="SSF56655">
    <property type="entry name" value="Carbohydrate phosphatase"/>
    <property type="match status" value="1"/>
</dbReference>
<feature type="chain" id="PRO_0000364502" description="Fructose-1,6-bisphosphatase class 1">
    <location>
        <begin position="1"/>
        <end position="338"/>
    </location>
</feature>
<feature type="binding site" evidence="1">
    <location>
        <position position="94"/>
    </location>
    <ligand>
        <name>Mg(2+)</name>
        <dbReference type="ChEBI" id="CHEBI:18420"/>
        <label>1</label>
    </ligand>
</feature>
<feature type="binding site" evidence="1">
    <location>
        <position position="116"/>
    </location>
    <ligand>
        <name>Mg(2+)</name>
        <dbReference type="ChEBI" id="CHEBI:18420"/>
        <label>1</label>
    </ligand>
</feature>
<feature type="binding site" evidence="1">
    <location>
        <position position="116"/>
    </location>
    <ligand>
        <name>Mg(2+)</name>
        <dbReference type="ChEBI" id="CHEBI:18420"/>
        <label>2</label>
    </ligand>
</feature>
<feature type="binding site" evidence="1">
    <location>
        <position position="118"/>
    </location>
    <ligand>
        <name>Mg(2+)</name>
        <dbReference type="ChEBI" id="CHEBI:18420"/>
        <label>1</label>
    </ligand>
</feature>
<feature type="binding site" evidence="1">
    <location>
        <begin position="119"/>
        <end position="122"/>
    </location>
    <ligand>
        <name>substrate</name>
    </ligand>
</feature>
<feature type="binding site" evidence="1">
    <location>
        <position position="119"/>
    </location>
    <ligand>
        <name>Mg(2+)</name>
        <dbReference type="ChEBI" id="CHEBI:18420"/>
        <label>2</label>
    </ligand>
</feature>
<feature type="binding site" evidence="1">
    <location>
        <position position="210"/>
    </location>
    <ligand>
        <name>substrate</name>
    </ligand>
</feature>
<feature type="binding site" evidence="1">
    <location>
        <position position="276"/>
    </location>
    <ligand>
        <name>substrate</name>
    </ligand>
</feature>
<feature type="binding site" evidence="1">
    <location>
        <position position="282"/>
    </location>
    <ligand>
        <name>Mg(2+)</name>
        <dbReference type="ChEBI" id="CHEBI:18420"/>
        <label>2</label>
    </ligand>
</feature>
<sequence length="338" mass="37377">MSITRRTTLSKYLIEQQRETHNLPADLRLLIEVVARACKAISYNVSKGALGDALGTAGSENVQGEVQKKLDILSNEILLDANEWGGNLAAMASEEMETFFPIPANYPRGEYLLVFDPLDGSSNIDVNVSIGTIFSVLRCPDGQQATEQSFLQPGTEQVAAGYAVYGPQTVFVLTTGNGVNCFTLDREVGSWVLTQSNLRIPEDTREYAINASNARHWYEPVKRYIDELNAGAEGPRGENFNMRWIASMVADVHRILNRGGIFMYPADKRTPDRPGKLRLMYEANPMSFIVEQAGGAATTGLKRILDVQPTGLHQRVPVILGSKNEVERVARYHEQAQS</sequence>
<evidence type="ECO:0000255" key="1">
    <source>
        <dbReference type="HAMAP-Rule" id="MF_01855"/>
    </source>
</evidence>
<organism>
    <name type="scientific">Burkholderia pseudomallei (strain 668)</name>
    <dbReference type="NCBI Taxonomy" id="320373"/>
    <lineage>
        <taxon>Bacteria</taxon>
        <taxon>Pseudomonadati</taxon>
        <taxon>Pseudomonadota</taxon>
        <taxon>Betaproteobacteria</taxon>
        <taxon>Burkholderiales</taxon>
        <taxon>Burkholderiaceae</taxon>
        <taxon>Burkholderia</taxon>
        <taxon>pseudomallei group</taxon>
    </lineage>
</organism>
<reference key="1">
    <citation type="journal article" date="2010" name="Genome Biol. Evol.">
        <title>Continuing evolution of Burkholderia mallei through genome reduction and large-scale rearrangements.</title>
        <authorList>
            <person name="Losada L."/>
            <person name="Ronning C.M."/>
            <person name="DeShazer D."/>
            <person name="Woods D."/>
            <person name="Fedorova N."/>
            <person name="Kim H.S."/>
            <person name="Shabalina S.A."/>
            <person name="Pearson T.R."/>
            <person name="Brinkac L."/>
            <person name="Tan P."/>
            <person name="Nandi T."/>
            <person name="Crabtree J."/>
            <person name="Badger J."/>
            <person name="Beckstrom-Sternberg S."/>
            <person name="Saqib M."/>
            <person name="Schutzer S.E."/>
            <person name="Keim P."/>
            <person name="Nierman W.C."/>
        </authorList>
    </citation>
    <scope>NUCLEOTIDE SEQUENCE [LARGE SCALE GENOMIC DNA]</scope>
    <source>
        <strain>668</strain>
    </source>
</reference>
<comment type="catalytic activity">
    <reaction evidence="1">
        <text>beta-D-fructose 1,6-bisphosphate + H2O = beta-D-fructose 6-phosphate + phosphate</text>
        <dbReference type="Rhea" id="RHEA:11064"/>
        <dbReference type="ChEBI" id="CHEBI:15377"/>
        <dbReference type="ChEBI" id="CHEBI:32966"/>
        <dbReference type="ChEBI" id="CHEBI:43474"/>
        <dbReference type="ChEBI" id="CHEBI:57634"/>
        <dbReference type="EC" id="3.1.3.11"/>
    </reaction>
</comment>
<comment type="cofactor">
    <cofactor evidence="1">
        <name>Mg(2+)</name>
        <dbReference type="ChEBI" id="CHEBI:18420"/>
    </cofactor>
    <text evidence="1">Binds 2 magnesium ions per subunit.</text>
</comment>
<comment type="pathway">
    <text evidence="1">Carbohydrate biosynthesis; gluconeogenesis.</text>
</comment>
<comment type="subunit">
    <text evidence="1">Homotetramer.</text>
</comment>
<comment type="subcellular location">
    <subcellularLocation>
        <location evidence="1">Cytoplasm</location>
    </subcellularLocation>
</comment>
<comment type="similarity">
    <text evidence="1">Belongs to the FBPase class 1 family.</text>
</comment>
<proteinExistence type="inferred from homology"/>